<proteinExistence type="evidence at transcript level"/>
<reference key="1">
    <citation type="submission" date="2004-11" db="EMBL/GenBank/DDBJ databases">
        <authorList>
            <consortium name="The German cDNA consortium"/>
        </authorList>
    </citation>
    <scope>NUCLEOTIDE SEQUENCE [LARGE SCALE MRNA]</scope>
    <source>
        <tissue>Kidney</tissue>
    </source>
</reference>
<accession>Q5RDP8</accession>
<feature type="chain" id="PRO_0000279473" description="Proton-activated chloride channel">
    <location>
        <begin position="1"/>
        <end position="350"/>
    </location>
</feature>
<feature type="topological domain" description="Cytoplasmic" evidence="3">
    <location>
        <begin position="1"/>
        <end position="64"/>
    </location>
</feature>
<feature type="transmembrane region" description="Helical" evidence="4">
    <location>
        <begin position="65"/>
        <end position="85"/>
    </location>
</feature>
<feature type="topological domain" description="Extracellular" evidence="4">
    <location>
        <begin position="86"/>
        <end position="301"/>
    </location>
</feature>
<feature type="transmembrane region" description="Helical" evidence="4">
    <location>
        <begin position="302"/>
        <end position="318"/>
    </location>
</feature>
<feature type="topological domain" description="Cytoplasmic" evidence="3">
    <location>
        <begin position="319"/>
        <end position="350"/>
    </location>
</feature>
<feature type="modified residue" description="Phosphoserine" evidence="3">
    <location>
        <position position="9"/>
    </location>
</feature>
<feature type="modified residue" description="Phosphotyrosine" evidence="2">
    <location>
        <position position="10"/>
    </location>
</feature>
<feature type="modified residue" description="Phosphoserine" evidence="2">
    <location>
        <position position="14"/>
    </location>
</feature>
<feature type="modified residue" description="Phosphoserine" evidence="1">
    <location>
        <position position="24"/>
    </location>
</feature>
<feature type="glycosylation site" description="N-linked (GlcNAc...) asparagine" evidence="4">
    <location>
        <position position="155"/>
    </location>
</feature>
<feature type="glycosylation site" description="N-linked (GlcNAc...) asparagine" evidence="4">
    <location>
        <position position="162"/>
    </location>
</feature>
<name>PACC1_PONAB</name>
<dbReference type="EMBL" id="CR857855">
    <property type="protein sequence ID" value="CAH90109.1"/>
    <property type="molecule type" value="mRNA"/>
</dbReference>
<dbReference type="RefSeq" id="NP_001125013.1">
    <property type="nucleotide sequence ID" value="NM_001131541.1"/>
</dbReference>
<dbReference type="SMR" id="Q5RDP8"/>
<dbReference type="FunCoup" id="Q5RDP8">
    <property type="interactions" value="419"/>
</dbReference>
<dbReference type="STRING" id="9601.ENSPPYP00000024234"/>
<dbReference type="GlyCosmos" id="Q5RDP8">
    <property type="glycosylation" value="2 sites, No reported glycans"/>
</dbReference>
<dbReference type="GeneID" id="100171892"/>
<dbReference type="KEGG" id="pon:100171892"/>
<dbReference type="CTD" id="55248"/>
<dbReference type="eggNOG" id="ENOG502QS5H">
    <property type="taxonomic scope" value="Eukaryota"/>
</dbReference>
<dbReference type="HOGENOM" id="CLU_1342892_0_0_1"/>
<dbReference type="InParanoid" id="Q5RDP8"/>
<dbReference type="OrthoDB" id="10069062at2759"/>
<dbReference type="Proteomes" id="UP000001595">
    <property type="component" value="Unplaced"/>
</dbReference>
<dbReference type="GO" id="GO:0009986">
    <property type="term" value="C:cell surface"/>
    <property type="evidence" value="ECO:0007669"/>
    <property type="project" value="TreeGrafter"/>
</dbReference>
<dbReference type="GO" id="GO:0034707">
    <property type="term" value="C:chloride channel complex"/>
    <property type="evidence" value="ECO:0007669"/>
    <property type="project" value="UniProtKB-KW"/>
</dbReference>
<dbReference type="GO" id="GO:0005886">
    <property type="term" value="C:plasma membrane"/>
    <property type="evidence" value="ECO:0000250"/>
    <property type="project" value="UniProtKB"/>
</dbReference>
<dbReference type="GO" id="GO:0061797">
    <property type="term" value="F:pH-gated chloride channel activity"/>
    <property type="evidence" value="ECO:0000250"/>
    <property type="project" value="UniProtKB"/>
</dbReference>
<dbReference type="GO" id="GO:0006821">
    <property type="term" value="P:chloride transport"/>
    <property type="evidence" value="ECO:0000250"/>
    <property type="project" value="UniProtKB"/>
</dbReference>
<dbReference type="InterPro" id="IPR029366">
    <property type="entry name" value="TMEM206"/>
</dbReference>
<dbReference type="PANTHER" id="PTHR16087:SF0">
    <property type="entry name" value="PROTON-ACTIVATED CHLORIDE CHANNEL"/>
    <property type="match status" value="1"/>
</dbReference>
<dbReference type="PANTHER" id="PTHR16087">
    <property type="entry name" value="TRANSMEMBRANE PROTEIN 206"/>
    <property type="match status" value="1"/>
</dbReference>
<dbReference type="Pfam" id="PF15122">
    <property type="entry name" value="TMEM206"/>
    <property type="match status" value="1"/>
</dbReference>
<organism>
    <name type="scientific">Pongo abelii</name>
    <name type="common">Sumatran orangutan</name>
    <name type="synonym">Pongo pygmaeus abelii</name>
    <dbReference type="NCBI Taxonomy" id="9601"/>
    <lineage>
        <taxon>Eukaryota</taxon>
        <taxon>Metazoa</taxon>
        <taxon>Chordata</taxon>
        <taxon>Craniata</taxon>
        <taxon>Vertebrata</taxon>
        <taxon>Euteleostomi</taxon>
        <taxon>Mammalia</taxon>
        <taxon>Eutheria</taxon>
        <taxon>Euarchontoglires</taxon>
        <taxon>Primates</taxon>
        <taxon>Haplorrhini</taxon>
        <taxon>Catarrhini</taxon>
        <taxon>Hominidae</taxon>
        <taxon>Pongo</taxon>
    </lineage>
</organism>
<keyword id="KW-1003">Cell membrane</keyword>
<keyword id="KW-0868">Chloride</keyword>
<keyword id="KW-0869">Chloride channel</keyword>
<keyword id="KW-0325">Glycoprotein</keyword>
<keyword id="KW-0407">Ion channel</keyword>
<keyword id="KW-0406">Ion transport</keyword>
<keyword id="KW-0472">Membrane</keyword>
<keyword id="KW-0597">Phosphoprotein</keyword>
<keyword id="KW-1185">Reference proteome</keyword>
<keyword id="KW-0812">Transmembrane</keyword>
<keyword id="KW-1133">Transmembrane helix</keyword>
<keyword id="KW-0813">Transport</keyword>
<evidence type="ECO:0000250" key="1">
    <source>
        <dbReference type="UniProtKB" id="Q66H28"/>
    </source>
</evidence>
<evidence type="ECO:0000250" key="2">
    <source>
        <dbReference type="UniProtKB" id="Q9D771"/>
    </source>
</evidence>
<evidence type="ECO:0000250" key="3">
    <source>
        <dbReference type="UniProtKB" id="Q9H813"/>
    </source>
</evidence>
<evidence type="ECO:0000255" key="4"/>
<evidence type="ECO:0000305" key="5"/>
<gene>
    <name evidence="3" type="primary">PACC1</name>
    <name evidence="3" type="synonym">TMEM206</name>
</gene>
<sequence>MIRQERSTSYQELSEELDQVVENSELADEQDKETVKVQGPGVLPGLDSESASSSIRFSKACLKNVFPVLLIFIYLLLMAVAVFLVYQTITDFREKLKHPVMSVSYKEVDRYDAPGIALYPGQAQLLSCKHHYEVIPPLTSPGQPGDMNCTTQRINYTDPFSNQTVKSALIVQGPREVKKRELVFLQFRLNKSSEDFSAIDYLLFSSFQEFLQSPNRVGFMQACESAYSSWKFSGGFRTWVKMSLVKTKEEDGREAVEFRQETSVVNYIDQRPAAEKSAQLFFVVFEWKDPFIQKVQDIITANPWNTIALLCGAFLALFKAAEFAKLSIKWMIKIRKRYLKRRGQATSHIS</sequence>
<comment type="function">
    <text evidence="3">Chloride channel gated by pH that facilitates the entry of chloride ions into cells upon exposure to extracellular acidic pH. Involved in acidosis-induced cell death by mediating chloride influx and subsequent cell swelling.</text>
</comment>
<comment type="catalytic activity">
    <reaction evidence="3">
        <text>chloride(in) = chloride(out)</text>
        <dbReference type="Rhea" id="RHEA:29823"/>
        <dbReference type="ChEBI" id="CHEBI:17996"/>
    </reaction>
</comment>
<comment type="subcellular location">
    <subcellularLocation>
        <location evidence="3">Cell membrane</location>
        <topology evidence="3">Multi-pass membrane protein</topology>
    </subcellularLocation>
</comment>
<comment type="similarity">
    <text evidence="5">Belongs to the proton-activated chloride channel family.</text>
</comment>
<protein>
    <recommendedName>
        <fullName evidence="3">Proton-activated chloride channel</fullName>
        <shortName evidence="3">PAC</shortName>
    </recommendedName>
    <alternativeName>
        <fullName evidence="5">Transmembrane protein 206</fullName>
    </alternativeName>
</protein>